<keyword id="KW-0067">ATP-binding</keyword>
<keyword id="KW-0963">Cytoplasm</keyword>
<keyword id="KW-0418">Kinase</keyword>
<keyword id="KW-0460">Magnesium</keyword>
<keyword id="KW-0479">Metal-binding</keyword>
<keyword id="KW-0546">Nucleotide metabolism</keyword>
<keyword id="KW-0547">Nucleotide-binding</keyword>
<keyword id="KW-0597">Phosphoprotein</keyword>
<keyword id="KW-1185">Reference proteome</keyword>
<keyword id="KW-0808">Transferase</keyword>
<name>NDK_SYNE7</name>
<gene>
    <name evidence="3" type="primary">ndk</name>
    <name type="ordered locus">Synpcc7942_2497</name>
    <name type="ORF">sea0028</name>
</gene>
<proteinExistence type="inferred from homology"/>
<evidence type="ECO:0000250" key="1">
    <source>
        <dbReference type="UniProtKB" id="Q9KNM4"/>
    </source>
</evidence>
<evidence type="ECO:0000250" key="2">
    <source>
        <dbReference type="UniProtKB" id="Q9KTX4"/>
    </source>
</evidence>
<evidence type="ECO:0000255" key="3">
    <source>
        <dbReference type="HAMAP-Rule" id="MF_00451"/>
    </source>
</evidence>
<evidence type="ECO:0000305" key="4"/>
<reference key="1">
    <citation type="submission" date="2002-11" db="EMBL/GenBank/DDBJ databases">
        <title>Synechococcus elongatus PCC7942 genome sequence, cosmid 7H1 and 2E8.</title>
        <authorList>
            <person name="Holtman C.K."/>
            <person name="Socias T."/>
            <person name="Mohler B.J."/>
            <person name="Chen Y."/>
            <person name="Min H."/>
            <person name="Golden S.S."/>
            <person name="Youderian P."/>
            <person name="Sandoval P."/>
            <person name="Gonzalez A."/>
            <person name="Salinas I."/>
        </authorList>
    </citation>
    <scope>NUCLEOTIDE SEQUENCE [GENOMIC DNA]</scope>
</reference>
<reference key="2">
    <citation type="submission" date="2005-08" db="EMBL/GenBank/DDBJ databases">
        <title>Complete sequence of chromosome 1 of Synechococcus elongatus PCC 7942.</title>
        <authorList>
            <consortium name="US DOE Joint Genome Institute"/>
            <person name="Copeland A."/>
            <person name="Lucas S."/>
            <person name="Lapidus A."/>
            <person name="Barry K."/>
            <person name="Detter J.C."/>
            <person name="Glavina T."/>
            <person name="Hammon N."/>
            <person name="Israni S."/>
            <person name="Pitluck S."/>
            <person name="Schmutz J."/>
            <person name="Larimer F."/>
            <person name="Land M."/>
            <person name="Kyrpides N."/>
            <person name="Lykidis A."/>
            <person name="Golden S."/>
            <person name="Richardson P."/>
        </authorList>
    </citation>
    <scope>NUCLEOTIDE SEQUENCE [LARGE SCALE GENOMIC DNA]</scope>
    <source>
        <strain>ATCC 33912 / PCC 7942 / FACHB-805</strain>
    </source>
</reference>
<protein>
    <recommendedName>
        <fullName evidence="3">Nucleoside diphosphate kinase</fullName>
        <shortName evidence="3">NDK</shortName>
        <shortName evidence="3">NDP kinase</shortName>
        <ecNumber evidence="3">2.7.4.6</ecNumber>
    </recommendedName>
    <alternativeName>
        <fullName evidence="3">Nucleoside-2-P kinase</fullName>
    </alternativeName>
</protein>
<accession>P50590</accession>
<accession>Q31K92</accession>
<sequence>MERTFIAIKPDGVQRGLVGTIIGRFEQKGFKLVGLKQLKPSRELAEQHYAVHRERPFFNGLVEFITSGPIVAIVLEGEGVVAAARKLIGATNPLTAEPGTIRGDFGVNIGRNIIHGSDAIETAQQEIALWFSPAELSDWTPTIQPWLYE</sequence>
<organism>
    <name type="scientific">Synechococcus elongatus (strain ATCC 33912 / PCC 7942 / FACHB-805)</name>
    <name type="common">Anacystis nidulans R2</name>
    <dbReference type="NCBI Taxonomy" id="1140"/>
    <lineage>
        <taxon>Bacteria</taxon>
        <taxon>Bacillati</taxon>
        <taxon>Cyanobacteriota</taxon>
        <taxon>Cyanophyceae</taxon>
        <taxon>Synechococcales</taxon>
        <taxon>Synechococcaceae</taxon>
        <taxon>Synechococcus</taxon>
    </lineage>
</organism>
<feature type="chain" id="PRO_0000137063" description="Nucleoside diphosphate kinase">
    <location>
        <begin position="1"/>
        <end position="149"/>
    </location>
</feature>
<feature type="active site" description="Pros-phosphohistidine intermediate" evidence="3">
    <location>
        <position position="115"/>
    </location>
</feature>
<feature type="binding site" evidence="3">
    <location>
        <position position="9"/>
    </location>
    <ligand>
        <name>ATP</name>
        <dbReference type="ChEBI" id="CHEBI:30616"/>
    </ligand>
</feature>
<feature type="binding site" evidence="3">
    <location>
        <position position="57"/>
    </location>
    <ligand>
        <name>ATP</name>
        <dbReference type="ChEBI" id="CHEBI:30616"/>
    </ligand>
</feature>
<feature type="binding site" evidence="3">
    <location>
        <position position="85"/>
    </location>
    <ligand>
        <name>ATP</name>
        <dbReference type="ChEBI" id="CHEBI:30616"/>
    </ligand>
</feature>
<feature type="binding site" evidence="3">
    <location>
        <position position="91"/>
    </location>
    <ligand>
        <name>ATP</name>
        <dbReference type="ChEBI" id="CHEBI:30616"/>
    </ligand>
</feature>
<feature type="binding site" evidence="3">
    <location>
        <position position="102"/>
    </location>
    <ligand>
        <name>ATP</name>
        <dbReference type="ChEBI" id="CHEBI:30616"/>
    </ligand>
</feature>
<feature type="binding site" evidence="3">
    <location>
        <position position="112"/>
    </location>
    <ligand>
        <name>ATP</name>
        <dbReference type="ChEBI" id="CHEBI:30616"/>
    </ligand>
</feature>
<comment type="function">
    <text evidence="3">Major role in the synthesis of nucleoside triphosphates other than ATP. The ATP gamma phosphate is transferred to the NDP beta phosphate via a ping-pong mechanism, using a phosphorylated active-site intermediate.</text>
</comment>
<comment type="function">
    <text evidence="1">(Microbial infection) Catalyzes the phosphorylation of dZDP to dZTP, when the bacterium is infected by a phage that produces the substrate for the synthesis of dZTP (2- amino-2'-deoxyadenosine 5'-triphosphate), which is then used by the phage as a DNA polymerase substrate.</text>
</comment>
<comment type="catalytic activity">
    <reaction evidence="2">
        <text>dZDP + ATP = dZTP + ADP</text>
        <dbReference type="Rhea" id="RHEA:67644"/>
        <dbReference type="ChEBI" id="CHEBI:30616"/>
        <dbReference type="ChEBI" id="CHEBI:172929"/>
        <dbReference type="ChEBI" id="CHEBI:172931"/>
        <dbReference type="ChEBI" id="CHEBI:456216"/>
    </reaction>
</comment>
<comment type="catalytic activity">
    <reaction evidence="3">
        <text>a 2'-deoxyribonucleoside 5'-diphosphate + ATP = a 2'-deoxyribonucleoside 5'-triphosphate + ADP</text>
        <dbReference type="Rhea" id="RHEA:44640"/>
        <dbReference type="ChEBI" id="CHEBI:30616"/>
        <dbReference type="ChEBI" id="CHEBI:61560"/>
        <dbReference type="ChEBI" id="CHEBI:73316"/>
        <dbReference type="ChEBI" id="CHEBI:456216"/>
        <dbReference type="EC" id="2.7.4.6"/>
    </reaction>
</comment>
<comment type="catalytic activity">
    <reaction evidence="3">
        <text>a ribonucleoside 5'-diphosphate + ATP = a ribonucleoside 5'-triphosphate + ADP</text>
        <dbReference type="Rhea" id="RHEA:18113"/>
        <dbReference type="ChEBI" id="CHEBI:30616"/>
        <dbReference type="ChEBI" id="CHEBI:57930"/>
        <dbReference type="ChEBI" id="CHEBI:61557"/>
        <dbReference type="ChEBI" id="CHEBI:456216"/>
        <dbReference type="EC" id="2.7.4.6"/>
    </reaction>
</comment>
<comment type="cofactor">
    <cofactor evidence="3">
        <name>Mg(2+)</name>
        <dbReference type="ChEBI" id="CHEBI:18420"/>
    </cofactor>
</comment>
<comment type="pathway">
    <text evidence="2">Purine metabolism.</text>
</comment>
<comment type="subunit">
    <text evidence="3">Homotetramer.</text>
</comment>
<comment type="subcellular location">
    <subcellularLocation>
        <location evidence="3">Cytoplasm</location>
    </subcellularLocation>
</comment>
<comment type="similarity">
    <text evidence="3 4">Belongs to the NDK family.</text>
</comment>
<comment type="sequence caution" evidence="4">
    <conflict type="erroneous initiation">
        <sequence resource="EMBL-CDS" id="AAA81018"/>
    </conflict>
</comment>
<comment type="sequence caution" evidence="4">
    <conflict type="erroneous initiation">
        <sequence resource="EMBL-CDS" id="ABB58527"/>
    </conflict>
</comment>
<dbReference type="EC" id="2.7.4.6" evidence="3"/>
<dbReference type="EMBL" id="U30252">
    <property type="protein sequence ID" value="AAA81018.1"/>
    <property type="status" value="ALT_INIT"/>
    <property type="molecule type" value="Genomic_DNA"/>
</dbReference>
<dbReference type="EMBL" id="CP000100">
    <property type="protein sequence ID" value="ABB58527.1"/>
    <property type="status" value="ALT_INIT"/>
    <property type="molecule type" value="Genomic_DNA"/>
</dbReference>
<dbReference type="SMR" id="P50590"/>
<dbReference type="STRING" id="1140.Synpcc7942_2497"/>
<dbReference type="PaxDb" id="1140-Synpcc7942_2497"/>
<dbReference type="KEGG" id="syf:Synpcc7942_2497"/>
<dbReference type="eggNOG" id="COG0105">
    <property type="taxonomic scope" value="Bacteria"/>
</dbReference>
<dbReference type="HOGENOM" id="CLU_060216_6_3_3"/>
<dbReference type="BioCyc" id="SYNEL:SYNPCC7942_2497-MONOMER"/>
<dbReference type="Proteomes" id="UP000889800">
    <property type="component" value="Chromosome"/>
</dbReference>
<dbReference type="GO" id="GO:0005737">
    <property type="term" value="C:cytoplasm"/>
    <property type="evidence" value="ECO:0007669"/>
    <property type="project" value="UniProtKB-SubCell"/>
</dbReference>
<dbReference type="GO" id="GO:0005524">
    <property type="term" value="F:ATP binding"/>
    <property type="evidence" value="ECO:0007669"/>
    <property type="project" value="UniProtKB-UniRule"/>
</dbReference>
<dbReference type="GO" id="GO:0046872">
    <property type="term" value="F:metal ion binding"/>
    <property type="evidence" value="ECO:0007669"/>
    <property type="project" value="UniProtKB-KW"/>
</dbReference>
<dbReference type="GO" id="GO:0004550">
    <property type="term" value="F:nucleoside diphosphate kinase activity"/>
    <property type="evidence" value="ECO:0007669"/>
    <property type="project" value="UniProtKB-UniRule"/>
</dbReference>
<dbReference type="GO" id="GO:0006241">
    <property type="term" value="P:CTP biosynthetic process"/>
    <property type="evidence" value="ECO:0007669"/>
    <property type="project" value="UniProtKB-UniRule"/>
</dbReference>
<dbReference type="GO" id="GO:0006183">
    <property type="term" value="P:GTP biosynthetic process"/>
    <property type="evidence" value="ECO:0007669"/>
    <property type="project" value="UniProtKB-UniRule"/>
</dbReference>
<dbReference type="GO" id="GO:0006228">
    <property type="term" value="P:UTP biosynthetic process"/>
    <property type="evidence" value="ECO:0007669"/>
    <property type="project" value="UniProtKB-UniRule"/>
</dbReference>
<dbReference type="CDD" id="cd04413">
    <property type="entry name" value="NDPk_I"/>
    <property type="match status" value="1"/>
</dbReference>
<dbReference type="FunFam" id="3.30.70.141:FF:000002">
    <property type="entry name" value="Nucleoside diphosphate kinase"/>
    <property type="match status" value="1"/>
</dbReference>
<dbReference type="Gene3D" id="3.30.70.141">
    <property type="entry name" value="Nucleoside diphosphate kinase-like domain"/>
    <property type="match status" value="1"/>
</dbReference>
<dbReference type="HAMAP" id="MF_00451">
    <property type="entry name" value="NDP_kinase"/>
    <property type="match status" value="1"/>
</dbReference>
<dbReference type="InterPro" id="IPR034907">
    <property type="entry name" value="NDK-like_dom"/>
</dbReference>
<dbReference type="InterPro" id="IPR036850">
    <property type="entry name" value="NDK-like_dom_sf"/>
</dbReference>
<dbReference type="InterPro" id="IPR001564">
    <property type="entry name" value="Nucleoside_diP_kinase"/>
</dbReference>
<dbReference type="InterPro" id="IPR023005">
    <property type="entry name" value="Nucleoside_diP_kinase_AS"/>
</dbReference>
<dbReference type="NCBIfam" id="NF001908">
    <property type="entry name" value="PRK00668.1"/>
    <property type="match status" value="1"/>
</dbReference>
<dbReference type="PANTHER" id="PTHR11349">
    <property type="entry name" value="NUCLEOSIDE DIPHOSPHATE KINASE"/>
    <property type="match status" value="1"/>
</dbReference>
<dbReference type="Pfam" id="PF00334">
    <property type="entry name" value="NDK"/>
    <property type="match status" value="1"/>
</dbReference>
<dbReference type="PRINTS" id="PR01243">
    <property type="entry name" value="NUCDPKINASE"/>
</dbReference>
<dbReference type="SMART" id="SM00562">
    <property type="entry name" value="NDK"/>
    <property type="match status" value="1"/>
</dbReference>
<dbReference type="SUPFAM" id="SSF54919">
    <property type="entry name" value="Nucleoside diphosphate kinase, NDK"/>
    <property type="match status" value="1"/>
</dbReference>
<dbReference type="PROSITE" id="PS00469">
    <property type="entry name" value="NDPK"/>
    <property type="match status" value="1"/>
</dbReference>
<dbReference type="PROSITE" id="PS51374">
    <property type="entry name" value="NDPK_LIKE"/>
    <property type="match status" value="1"/>
</dbReference>